<accession>A9JPE1</accession>
<sequence length="435" mass="49671">MSTPKSDTCSPHQALARGMGFKNHHERLWWATFGPLLEKLLALCNYPVSLQYQHLSFIYHHLLPYLGPYPTVENGFAWKTAYSPDGTPAEVSLNFDGPKKTVRMDHVPISQWSGTPKDPFCQNVALELTKSLAGTLPDFTWDWFNHFVQTMFIPEPATDVVLAREPPNFRRMAMQSVNGCDLLTAGVRVKPVFNALWKSIETGIPHDKLLFDSIRNNTELFGAYLPALQVIEDYCQSDRAKEFQTRGCFLSFDATSIKDARLKVYLHGPQTAYMKVEDAFTLGGRLSNPNIQTGVKELRKLWYAVLNLPSDFPESEDLPATDDLYQGWLVNYELRPNNPVPEPKVYIPVAINNKDQDSIVQGLQEFFDRHESMDVRDYRDIFETLFLDAKNPTGIHHFITFSYKAHPYVTCYYKPHLEPVPAKELEESDVKGLSK</sequence>
<keyword id="KW-0808">Transferase</keyword>
<gene>
    <name evidence="6" type="primary">atmD</name>
</gene>
<protein>
    <recommendedName>
        <fullName evidence="7">Indole diterpene prenyltransferase atmD</fullName>
        <ecNumber evidence="3 9">2.5.1.-</ecNumber>
    </recommendedName>
    <alternativeName>
        <fullName evidence="6">Aflatrem synthesis protein D</fullName>
    </alternativeName>
</protein>
<comment type="function">
    <text evidence="2 3 5">Indole diterpene prenyltransferase; part of the ATM2 gene cluster that mediates the biosynthesis of aflatrem, a tremorgenic mycotoxin with acute neurotoxic effects (PubMed:19801473, PubMed:2867895). Synthesis of geranylgeranyl diphosphate (GGPP) by AtmG (a GGPP synthase) precedes condensation of GGPP with indole 3-glycerol phosphate, followed by epoxidation and cyclization by AtmM (a FAD-dependent monooxygenase) and AtmC (a prenyltransferase) to produce paspaline (PubMed:19801473). AtmB is also essential for paspaline production, but its exact role has not been identified yet (PubMed:19801473). AtmP, a cytochrome P450 monooxygenase, subsequently converts paspaline to 13-desoxypaxilline via PC-M6 by removal of the C-30 methyl group and oxidation at C-10 (PubMed:19801473). AtmQ, a cytochrome P450 monooxygenase, then catalyzes the oxidation of 13-desoxypaxilline, first at C-7 to produce paspalicine and then at C-13 to form paspalinine (PubMed:19801473). Finally, AtmD prenylates paspalinine to form aflatrem (PubMed:19801473, PubMed:24038699).</text>
</comment>
<comment type="biophysicochemical properties">
    <kinetics>
        <KM evidence="3">302 uM for dimethylallyl diphosphate (DMAPP)</KM>
        <KM evidence="3">131 uM for paspaline</KM>
    </kinetics>
</comment>
<comment type="induction">
    <text evidence="2 4">The onset of expression occurs at 60-hour-old stationary cultures and the steady-state levels correlates with the onset of aflatrem biosynthesis at 108 hours (PubMed:19801473). Expression is regulated by nsdC (PubMed:26686623).</text>
</comment>
<comment type="similarity">
    <text evidence="8">Belongs to the tryptophan dimethylallyltransferase family.</text>
</comment>
<dbReference type="EC" id="2.5.1.-" evidence="3 9"/>
<dbReference type="EMBL" id="AM921700">
    <property type="protein sequence ID" value="CAP53937.2"/>
    <property type="molecule type" value="Genomic_DNA"/>
</dbReference>
<dbReference type="SMR" id="A9JPE1"/>
<dbReference type="VEuPathDB" id="FungiDB:AFLA_008138"/>
<dbReference type="VEuPathDB" id="FungiDB:F9C07_2281026"/>
<dbReference type="GO" id="GO:0016765">
    <property type="term" value="F:transferase activity, transferring alkyl or aryl (other than methyl) groups"/>
    <property type="evidence" value="ECO:0007669"/>
    <property type="project" value="InterPro"/>
</dbReference>
<dbReference type="GO" id="GO:0009820">
    <property type="term" value="P:alkaloid metabolic process"/>
    <property type="evidence" value="ECO:0007669"/>
    <property type="project" value="InterPro"/>
</dbReference>
<dbReference type="CDD" id="cd13929">
    <property type="entry name" value="PT-DMATS_CymD"/>
    <property type="match status" value="1"/>
</dbReference>
<dbReference type="InterPro" id="IPR017795">
    <property type="entry name" value="Aro_prenylTrfase_DMATS"/>
</dbReference>
<dbReference type="InterPro" id="IPR012148">
    <property type="entry name" value="DMATS-type_fun"/>
</dbReference>
<dbReference type="NCBIfam" id="TIGR03429">
    <property type="entry name" value="arom_pren_DMATS"/>
    <property type="match status" value="1"/>
</dbReference>
<dbReference type="PANTHER" id="PTHR40627">
    <property type="entry name" value="INDOLE PRENYLTRANSFERASE TDIB-RELATED"/>
    <property type="match status" value="1"/>
</dbReference>
<dbReference type="PANTHER" id="PTHR40627:SF3">
    <property type="entry name" value="PRENYLTRANSFERASE ASQH2-RELATED"/>
    <property type="match status" value="1"/>
</dbReference>
<dbReference type="Pfam" id="PF11991">
    <property type="entry name" value="Trp_DMAT"/>
    <property type="match status" value="1"/>
</dbReference>
<dbReference type="PIRSF" id="PIRSF000509">
    <property type="entry name" value="Trp_DMAT"/>
    <property type="match status" value="1"/>
</dbReference>
<organism>
    <name type="scientific">Aspergillus flavus</name>
    <dbReference type="NCBI Taxonomy" id="5059"/>
    <lineage>
        <taxon>Eukaryota</taxon>
        <taxon>Fungi</taxon>
        <taxon>Dikarya</taxon>
        <taxon>Ascomycota</taxon>
        <taxon>Pezizomycotina</taxon>
        <taxon>Eurotiomycetes</taxon>
        <taxon>Eurotiomycetidae</taxon>
        <taxon>Eurotiales</taxon>
        <taxon>Aspergillaceae</taxon>
        <taxon>Aspergillus</taxon>
        <taxon>Aspergillus subgen. Circumdati</taxon>
    </lineage>
</organism>
<proteinExistence type="evidence at protein level"/>
<feature type="chain" id="PRO_0000436128" description="Indole diterpene prenyltransferase atmD">
    <location>
        <begin position="1"/>
        <end position="435"/>
    </location>
</feature>
<feature type="binding site" evidence="1">
    <location>
        <begin position="81"/>
        <end position="82"/>
    </location>
    <ligand>
        <name>L-tryptophan</name>
        <dbReference type="ChEBI" id="CHEBI:57912"/>
    </ligand>
</feature>
<feature type="binding site" evidence="1">
    <location>
        <position position="90"/>
    </location>
    <ligand>
        <name>L-tryptophan</name>
        <dbReference type="ChEBI" id="CHEBI:57912"/>
    </ligand>
</feature>
<feature type="binding site" evidence="1">
    <location>
        <position position="103"/>
    </location>
    <ligand>
        <name>substrate</name>
    </ligand>
</feature>
<feature type="binding site" evidence="1">
    <location>
        <position position="190"/>
    </location>
    <ligand>
        <name>substrate</name>
    </ligand>
</feature>
<feature type="binding site" evidence="1">
    <location>
        <position position="261"/>
    </location>
    <ligand>
        <name>substrate</name>
    </ligand>
</feature>
<feature type="binding site" evidence="1">
    <location>
        <position position="263"/>
    </location>
    <ligand>
        <name>substrate</name>
    </ligand>
</feature>
<feature type="binding site" evidence="1">
    <location>
        <position position="265"/>
    </location>
    <ligand>
        <name>substrate</name>
    </ligand>
</feature>
<feature type="binding site" evidence="1">
    <location>
        <position position="346"/>
    </location>
    <ligand>
        <name>substrate</name>
    </ligand>
</feature>
<feature type="binding site" evidence="1">
    <location>
        <position position="413"/>
    </location>
    <ligand>
        <name>substrate</name>
    </ligand>
</feature>
<reference key="1">
    <citation type="journal article" date="2009" name="Appl. Environ. Microbiol.">
        <title>Identification of two aflatrem biosynthesis gene loci in Aspergillus flavus and metabolic engineering of Penicillium paxilli to elucidate their function.</title>
        <authorList>
            <person name="Nicholson M.J."/>
            <person name="Koulman A."/>
            <person name="Monahan B.J."/>
            <person name="Pritchard B.L."/>
            <person name="Payne G.A."/>
            <person name="Scott B."/>
        </authorList>
    </citation>
    <scope>NUCLEOTIDE SEQUENCE [GENOMIC DNA]</scope>
    <scope>IDENTIFICATION</scope>
    <scope>INDUCTION</scope>
    <scope>FUNCTION</scope>
    <source>
        <strain>NRRL 6541</strain>
    </source>
</reference>
<reference key="2">
    <citation type="journal article" date="1985" name="Environ. Health Perspect.">
        <title>Aflatrem: a tremorgenic mycotoxin with acute neurotoxic effects.</title>
        <authorList>
            <person name="Valdes J.J."/>
            <person name="Cameron J.E."/>
            <person name="Cole R.J."/>
        </authorList>
    </citation>
    <scope>FUNCTION</scope>
</reference>
<reference key="3">
    <citation type="journal article" date="2013" name="Appl. Environ. Microbiol.">
        <title>Regiospecificities and prenylation mode specificities of the fungal indole diterpene prenyltransferases AtmD and PaxD.</title>
        <authorList>
            <person name="Liu C."/>
            <person name="Minami A."/>
            <person name="Noike M."/>
            <person name="Toshima H."/>
            <person name="Oikawa H."/>
            <person name="Dairi T."/>
        </authorList>
    </citation>
    <scope>FUNCTION</scope>
    <scope>CATALYTIC ACTIVITY</scope>
    <scope>BIOPHYSICOCHEMICAL PROPERTIES</scope>
</reference>
<reference key="4">
    <citation type="journal article" date="2016" name="Microbiol. Res.">
        <title>RNA sequencing of an nsdC mutant reveals global regulation of secondary metabolic gene clusters in Aspergillus flavus.</title>
        <authorList>
            <person name="Gilbert M.K."/>
            <person name="Mack B.M."/>
            <person name="Wei Q."/>
            <person name="Bland J.M."/>
            <person name="Bhatnagar D."/>
            <person name="Cary J.W."/>
        </authorList>
    </citation>
    <scope>INDUCTION</scope>
</reference>
<name>ATMD_ASPFL</name>
<evidence type="ECO:0000250" key="1">
    <source>
        <dbReference type="UniProtKB" id="Q50EL0"/>
    </source>
</evidence>
<evidence type="ECO:0000269" key="2">
    <source>
    </source>
</evidence>
<evidence type="ECO:0000269" key="3">
    <source>
    </source>
</evidence>
<evidence type="ECO:0000269" key="4">
    <source>
    </source>
</evidence>
<evidence type="ECO:0000269" key="5">
    <source>
    </source>
</evidence>
<evidence type="ECO:0000303" key="6">
    <source>
    </source>
</evidence>
<evidence type="ECO:0000303" key="7">
    <source>
    </source>
</evidence>
<evidence type="ECO:0000305" key="8"/>
<evidence type="ECO:0000305" key="9">
    <source>
    </source>
</evidence>